<evidence type="ECO:0000250" key="1">
    <source>
        <dbReference type="UniProtKB" id="P10235"/>
    </source>
</evidence>
<evidence type="ECO:0000250" key="2">
    <source>
        <dbReference type="UniProtKB" id="P16823"/>
    </source>
</evidence>
<evidence type="ECO:0000305" key="3"/>
<organismHost>
    <name type="scientific">Equus caballus</name>
    <name type="common">Horse</name>
    <dbReference type="NCBI Taxonomy" id="9796"/>
</organismHost>
<keyword id="KW-1035">Host cytoplasm</keyword>
<keyword id="KW-1040">Host Golgi apparatus</keyword>
<keyword id="KW-0449">Lipoprotein</keyword>
<keyword id="KW-0564">Palmitate</keyword>
<keyword id="KW-0597">Phosphoprotein</keyword>
<keyword id="KW-0946">Virion</keyword>
<keyword id="KW-0920">Virion tegument</keyword>
<protein>
    <recommendedName>
        <fullName>Tegument protein UL51 homolog</fullName>
    </recommendedName>
</protein>
<comment type="function">
    <text evidence="1">Plays several roles during the time course of infection, including egress of virus particles from the perinuclear space and secondary envelopment of cytoplasmic capsids that bud into specific trans-Golgi network (TGN)-derived membranes.</text>
</comment>
<comment type="subunit">
    <text evidence="1 2">Oligomerizes. Interacts with ORF55; this interaction mediates ORF55 incorporation to virions.</text>
</comment>
<comment type="subcellular location">
    <subcellularLocation>
        <location evidence="1">Virion tegument</location>
    </subcellularLocation>
    <subcellularLocation>
        <location evidence="1">Host cytoplasm</location>
    </subcellularLocation>
    <subcellularLocation>
        <location evidence="1">Host Golgi apparatus</location>
    </subcellularLocation>
</comment>
<comment type="PTM">
    <text evidence="1">Phosphorylated.</text>
</comment>
<comment type="PTM">
    <text evidence="1">Palmitoylation is necessary for Golgi localization.</text>
</comment>
<comment type="similarity">
    <text evidence="3">Belongs to the herpesviridae UL51 family.</text>
</comment>
<sequence length="244" mass="26238">MFKWLMSSLCGTKNPASLEEVYEPIMGGKNPATMLRLQSALAAVNALLPATLTIEDVISSADNTRRLVKAQTLARTYQACQHNIECLSRHRASSDNPNLNAVVATHMANAKRLSDTCLAALMHLYLSVGAVDATTDTMVDHAIRMTAENSVVMADVAVLEKTLGLEPQPSVMAHDLLALESSVYNSGNSVPVNDYPAEDVESTQSVHSPLLSKRPSNTEVVCSSIPVKSNLKSKPRRKPSLVAA</sequence>
<feature type="chain" id="PRO_0000116101" description="Tegument protein UL51 homolog">
    <location>
        <begin position="1"/>
        <end position="244"/>
    </location>
</feature>
<feature type="lipid moiety-binding region" description="S-palmitoyl cysteine; by host" evidence="1">
    <location>
        <position position="10"/>
    </location>
</feature>
<dbReference type="EMBL" id="X17684">
    <property type="protein sequence ID" value="CAA35668.1"/>
    <property type="molecule type" value="Genomic_DNA"/>
</dbReference>
<dbReference type="PIR" id="S36703">
    <property type="entry name" value="S36703"/>
</dbReference>
<dbReference type="SMR" id="Q00038"/>
<dbReference type="KEGG" id="vg:1487646"/>
<dbReference type="GO" id="GO:0044177">
    <property type="term" value="C:host cell Golgi apparatus"/>
    <property type="evidence" value="ECO:0007669"/>
    <property type="project" value="UniProtKB-SubCell"/>
</dbReference>
<dbReference type="GO" id="GO:0019033">
    <property type="term" value="C:viral tegument"/>
    <property type="evidence" value="ECO:0007669"/>
    <property type="project" value="UniProtKB-SubCell"/>
</dbReference>
<dbReference type="InterPro" id="IPR007625">
    <property type="entry name" value="Herpes_UL51"/>
</dbReference>
<dbReference type="Pfam" id="PF04540">
    <property type="entry name" value="Herpes_UL51"/>
    <property type="match status" value="1"/>
</dbReference>
<name>TEG7_EHV4</name>
<organism>
    <name type="scientific">Equine herpesvirus 4 (strain 1942)</name>
    <name type="common">EHV-4</name>
    <name type="synonym">Equine rhinopneumonitis virus</name>
    <dbReference type="NCBI Taxonomy" id="10333"/>
    <lineage>
        <taxon>Viruses</taxon>
        <taxon>Duplodnaviria</taxon>
        <taxon>Heunggongvirae</taxon>
        <taxon>Peploviricota</taxon>
        <taxon>Herviviricetes</taxon>
        <taxon>Herpesvirales</taxon>
        <taxon>Orthoherpesviridae</taxon>
        <taxon>Alphaherpesvirinae</taxon>
        <taxon>Varicellovirus</taxon>
        <taxon>Varicellovirus equidalpha4</taxon>
        <taxon>Equid alphaherpesvirus 4</taxon>
    </lineage>
</organism>
<gene>
    <name type="primary">8</name>
    <name type="synonym">B2</name>
</gene>
<reference key="1">
    <citation type="journal article" date="1991" name="J. Virol.">
        <title>Antigenic and protein sequence homology between VP13/14, a herpes simplex virus type 1 tegument protein, and gp10, a glycoprotein of equine herpesvirus 1 and 4.</title>
        <authorList>
            <person name="Whittaker G.R."/>
            <person name="Riggio M.P."/>
            <person name="Halliburton I.W."/>
            <person name="Killington R.A."/>
            <person name="Allen G.P."/>
            <person name="Meredith D.M."/>
        </authorList>
    </citation>
    <scope>NUCLEOTIDE SEQUENCE [GENOMIC DNA]</scope>
</reference>
<accession>Q00038</accession>
<proteinExistence type="inferred from homology"/>